<name>FLGH_BARBK</name>
<comment type="function">
    <text evidence="1">Assembles around the rod to form the L-ring and probably protects the motor/basal body from shearing forces during rotation.</text>
</comment>
<comment type="subunit">
    <text evidence="1">The basal body constitutes a major portion of the flagellar organelle and consists of four rings (L,P,S, and M) mounted on a central rod.</text>
</comment>
<comment type="subcellular location">
    <subcellularLocation>
        <location evidence="1">Cell outer membrane</location>
        <topology evidence="1">Lipid-anchor</topology>
    </subcellularLocation>
    <subcellularLocation>
        <location evidence="1">Bacterial flagellum basal body</location>
    </subcellularLocation>
</comment>
<comment type="similarity">
    <text evidence="1">Belongs to the FlgH family.</text>
</comment>
<feature type="signal peptide" evidence="1">
    <location>
        <begin position="1"/>
        <end position="16"/>
    </location>
</feature>
<feature type="chain" id="PRO_1000050080" description="Flagellar L-ring protein">
    <location>
        <begin position="17"/>
        <end position="230"/>
    </location>
</feature>
<feature type="lipid moiety-binding region" description="N-palmitoyl cysteine" evidence="1">
    <location>
        <position position="17"/>
    </location>
</feature>
<feature type="lipid moiety-binding region" description="S-diacylglycerol cysteine" evidence="1">
    <location>
        <position position="17"/>
    </location>
</feature>
<evidence type="ECO:0000255" key="1">
    <source>
        <dbReference type="HAMAP-Rule" id="MF_00415"/>
    </source>
</evidence>
<keyword id="KW-0975">Bacterial flagellum</keyword>
<keyword id="KW-0998">Cell outer membrane</keyword>
<keyword id="KW-0449">Lipoprotein</keyword>
<keyword id="KW-0472">Membrane</keyword>
<keyword id="KW-0564">Palmitate</keyword>
<keyword id="KW-0732">Signal</keyword>
<accession>A1UTU3</accession>
<organism>
    <name type="scientific">Bartonella bacilliformis (strain ATCC 35685 / KC583 / Herrer 020/F12,63)</name>
    <dbReference type="NCBI Taxonomy" id="360095"/>
    <lineage>
        <taxon>Bacteria</taxon>
        <taxon>Pseudomonadati</taxon>
        <taxon>Pseudomonadota</taxon>
        <taxon>Alphaproteobacteria</taxon>
        <taxon>Hyphomicrobiales</taxon>
        <taxon>Bartonellaceae</taxon>
        <taxon>Bartonella</taxon>
    </lineage>
</organism>
<protein>
    <recommendedName>
        <fullName evidence="1">Flagellar L-ring protein</fullName>
    </recommendedName>
    <alternativeName>
        <fullName evidence="1">Basal body L-ring protein</fullName>
    </alternativeName>
</protein>
<gene>
    <name evidence="1" type="primary">flgH</name>
    <name type="ordered locus">BARBAKC583_1137</name>
</gene>
<proteinExistence type="inferred from homology"/>
<dbReference type="EMBL" id="CP000524">
    <property type="protein sequence ID" value="ABM45595.1"/>
    <property type="molecule type" value="Genomic_DNA"/>
</dbReference>
<dbReference type="RefSeq" id="WP_005767762.1">
    <property type="nucleotide sequence ID" value="NC_008783.1"/>
</dbReference>
<dbReference type="SMR" id="A1UTU3"/>
<dbReference type="STRING" id="360095.BARBAKC583_1137"/>
<dbReference type="GeneID" id="4684203"/>
<dbReference type="KEGG" id="bbk:BARBAKC583_1137"/>
<dbReference type="PATRIC" id="fig|360095.6.peg.1098"/>
<dbReference type="eggNOG" id="COG2063">
    <property type="taxonomic scope" value="Bacteria"/>
</dbReference>
<dbReference type="HOGENOM" id="CLU_069313_1_2_5"/>
<dbReference type="OrthoDB" id="9789227at2"/>
<dbReference type="Proteomes" id="UP000000643">
    <property type="component" value="Chromosome"/>
</dbReference>
<dbReference type="GO" id="GO:0009427">
    <property type="term" value="C:bacterial-type flagellum basal body, distal rod, L ring"/>
    <property type="evidence" value="ECO:0007669"/>
    <property type="project" value="InterPro"/>
</dbReference>
<dbReference type="GO" id="GO:0009279">
    <property type="term" value="C:cell outer membrane"/>
    <property type="evidence" value="ECO:0007669"/>
    <property type="project" value="UniProtKB-SubCell"/>
</dbReference>
<dbReference type="GO" id="GO:0003774">
    <property type="term" value="F:cytoskeletal motor activity"/>
    <property type="evidence" value="ECO:0007669"/>
    <property type="project" value="InterPro"/>
</dbReference>
<dbReference type="GO" id="GO:0071973">
    <property type="term" value="P:bacterial-type flagellum-dependent cell motility"/>
    <property type="evidence" value="ECO:0007669"/>
    <property type="project" value="InterPro"/>
</dbReference>
<dbReference type="HAMAP" id="MF_00415">
    <property type="entry name" value="FlgH"/>
    <property type="match status" value="1"/>
</dbReference>
<dbReference type="InterPro" id="IPR000527">
    <property type="entry name" value="Flag_Lring"/>
</dbReference>
<dbReference type="NCBIfam" id="NF001305">
    <property type="entry name" value="PRK00249.1-5"/>
    <property type="match status" value="1"/>
</dbReference>
<dbReference type="PANTHER" id="PTHR34933">
    <property type="entry name" value="FLAGELLAR L-RING PROTEIN"/>
    <property type="match status" value="1"/>
</dbReference>
<dbReference type="PANTHER" id="PTHR34933:SF1">
    <property type="entry name" value="FLAGELLAR L-RING PROTEIN"/>
    <property type="match status" value="1"/>
</dbReference>
<dbReference type="Pfam" id="PF02107">
    <property type="entry name" value="FlgH"/>
    <property type="match status" value="1"/>
</dbReference>
<dbReference type="PRINTS" id="PR01008">
    <property type="entry name" value="FLGLRINGFLGH"/>
</dbReference>
<sequence>MYLVFGIIFTSVIVTSCSYNTKDFNSVPDFSPVRADLGYAPSRTAQTYPLPPRESNYSLYRASGNSFFRDPRAMQPGDVLTVQISINDRASLNNKSDLKSDSSSKYTIGTGYSFMDRIAGSLEGESSNQSKGDGKIERQENIRLSVAAIVTDVLPNGNLIIRGSQEVRVNHELRILNIAGVVRPRDISGNNMIEYDKIAEARISYGGRGRISEIQQPPYGQQLLNQISPF</sequence>
<reference key="1">
    <citation type="submission" date="2006-12" db="EMBL/GenBank/DDBJ databases">
        <authorList>
            <person name="Hendrix L."/>
            <person name="Mohamoud Y."/>
            <person name="Radune D."/>
            <person name="Shvartsbeyn A."/>
            <person name="Daugherty S."/>
            <person name="Dodson R."/>
            <person name="Durkin A.S."/>
            <person name="Harkins D."/>
            <person name="Huot H."/>
            <person name="Kothari S.P."/>
            <person name="Madupu R."/>
            <person name="Li J."/>
            <person name="Nelson W.C."/>
            <person name="Shrivastava S."/>
            <person name="Giglio M.G."/>
            <person name="Haft D."/>
            <person name="Selengut J."/>
            <person name="Fraser-Ligget C."/>
            <person name="Seshadri R."/>
        </authorList>
    </citation>
    <scope>NUCLEOTIDE SEQUENCE [LARGE SCALE GENOMIC DNA]</scope>
    <source>
        <strain>ATCC 35685 / KC583 / Herrer 020/F12,63</strain>
    </source>
</reference>